<keyword id="KW-0238">DNA-binding</keyword>
<keyword id="KW-0658">Purine biosynthesis</keyword>
<keyword id="KW-0678">Repressor</keyword>
<keyword id="KW-0804">Transcription</keyword>
<keyword id="KW-0805">Transcription regulation</keyword>
<dbReference type="EMBL" id="CP000305">
    <property type="protein sequence ID" value="ABG18170.1"/>
    <property type="molecule type" value="Genomic_DNA"/>
</dbReference>
<dbReference type="EMBL" id="ACNQ01000010">
    <property type="protein sequence ID" value="EEO76746.1"/>
    <property type="molecule type" value="Genomic_DNA"/>
</dbReference>
<dbReference type="RefSeq" id="WP_002210943.1">
    <property type="nucleotide sequence ID" value="NZ_ACNQ01000010.1"/>
</dbReference>
<dbReference type="SMR" id="Q1CIL0"/>
<dbReference type="GeneID" id="57976289"/>
<dbReference type="KEGG" id="ypn:YPN_1841"/>
<dbReference type="HOGENOM" id="CLU_037628_6_2_6"/>
<dbReference type="UniPathway" id="UPA00488"/>
<dbReference type="Proteomes" id="UP000008936">
    <property type="component" value="Chromosome"/>
</dbReference>
<dbReference type="GO" id="GO:0003700">
    <property type="term" value="F:DNA-binding transcription factor activity"/>
    <property type="evidence" value="ECO:0007669"/>
    <property type="project" value="TreeGrafter"/>
</dbReference>
<dbReference type="GO" id="GO:0000976">
    <property type="term" value="F:transcription cis-regulatory region binding"/>
    <property type="evidence" value="ECO:0007669"/>
    <property type="project" value="TreeGrafter"/>
</dbReference>
<dbReference type="GO" id="GO:0045892">
    <property type="term" value="P:negative regulation of DNA-templated transcription"/>
    <property type="evidence" value="ECO:0007669"/>
    <property type="project" value="UniProtKB-UniRule"/>
</dbReference>
<dbReference type="GO" id="GO:0006164">
    <property type="term" value="P:purine nucleotide biosynthetic process"/>
    <property type="evidence" value="ECO:0007669"/>
    <property type="project" value="UniProtKB-UniPathway"/>
</dbReference>
<dbReference type="CDD" id="cd01392">
    <property type="entry name" value="HTH_LacI"/>
    <property type="match status" value="1"/>
</dbReference>
<dbReference type="CDD" id="cd06275">
    <property type="entry name" value="PBP1_PurR"/>
    <property type="match status" value="1"/>
</dbReference>
<dbReference type="FunFam" id="1.10.260.40:FF:000002">
    <property type="entry name" value="HTH-type transcriptional repressor PurR"/>
    <property type="match status" value="1"/>
</dbReference>
<dbReference type="FunFam" id="3.40.50.2300:FF:000045">
    <property type="entry name" value="HTH-type transcriptional repressor PurR"/>
    <property type="match status" value="1"/>
</dbReference>
<dbReference type="Gene3D" id="3.40.50.2300">
    <property type="match status" value="2"/>
</dbReference>
<dbReference type="Gene3D" id="1.10.260.40">
    <property type="entry name" value="lambda repressor-like DNA-binding domains"/>
    <property type="match status" value="1"/>
</dbReference>
<dbReference type="HAMAP" id="MF_01277">
    <property type="entry name" value="HTH_type_PurR"/>
    <property type="match status" value="1"/>
</dbReference>
<dbReference type="InterPro" id="IPR000843">
    <property type="entry name" value="HTH_LacI"/>
</dbReference>
<dbReference type="InterPro" id="IPR046335">
    <property type="entry name" value="LacI/GalR-like_sensor"/>
</dbReference>
<dbReference type="InterPro" id="IPR010982">
    <property type="entry name" value="Lambda_DNA-bd_dom_sf"/>
</dbReference>
<dbReference type="InterPro" id="IPR028082">
    <property type="entry name" value="Peripla_BP_I"/>
</dbReference>
<dbReference type="InterPro" id="IPR023588">
    <property type="entry name" value="Tscrpt_reg_HTH_PurR"/>
</dbReference>
<dbReference type="NCBIfam" id="NF007979">
    <property type="entry name" value="PRK10703.1"/>
    <property type="match status" value="1"/>
</dbReference>
<dbReference type="PANTHER" id="PTHR30146:SF148">
    <property type="entry name" value="HTH-TYPE TRANSCRIPTIONAL REPRESSOR PURR-RELATED"/>
    <property type="match status" value="1"/>
</dbReference>
<dbReference type="PANTHER" id="PTHR30146">
    <property type="entry name" value="LACI-RELATED TRANSCRIPTIONAL REPRESSOR"/>
    <property type="match status" value="1"/>
</dbReference>
<dbReference type="Pfam" id="PF00356">
    <property type="entry name" value="LacI"/>
    <property type="match status" value="1"/>
</dbReference>
<dbReference type="Pfam" id="PF13377">
    <property type="entry name" value="Peripla_BP_3"/>
    <property type="match status" value="1"/>
</dbReference>
<dbReference type="PRINTS" id="PR00036">
    <property type="entry name" value="HTHLACI"/>
</dbReference>
<dbReference type="SMART" id="SM00354">
    <property type="entry name" value="HTH_LACI"/>
    <property type="match status" value="1"/>
</dbReference>
<dbReference type="SUPFAM" id="SSF47413">
    <property type="entry name" value="lambda repressor-like DNA-binding domains"/>
    <property type="match status" value="1"/>
</dbReference>
<dbReference type="SUPFAM" id="SSF53822">
    <property type="entry name" value="Periplasmic binding protein-like I"/>
    <property type="match status" value="1"/>
</dbReference>
<dbReference type="PROSITE" id="PS00356">
    <property type="entry name" value="HTH_LACI_1"/>
    <property type="match status" value="1"/>
</dbReference>
<dbReference type="PROSITE" id="PS50932">
    <property type="entry name" value="HTH_LACI_2"/>
    <property type="match status" value="1"/>
</dbReference>
<reference key="1">
    <citation type="journal article" date="2006" name="J. Bacteriol.">
        <title>Complete genome sequence of Yersinia pestis strains Antiqua and Nepal516: evidence of gene reduction in an emerging pathogen.</title>
        <authorList>
            <person name="Chain P.S.G."/>
            <person name="Hu P."/>
            <person name="Malfatti S.A."/>
            <person name="Radnedge L."/>
            <person name="Larimer F."/>
            <person name="Vergez L.M."/>
            <person name="Worsham P."/>
            <person name="Chu M.C."/>
            <person name="Andersen G.L."/>
        </authorList>
    </citation>
    <scope>NUCLEOTIDE SEQUENCE [LARGE SCALE GENOMIC DNA]</scope>
    <source>
        <strain>Nepal516</strain>
    </source>
</reference>
<reference key="2">
    <citation type="submission" date="2009-04" db="EMBL/GenBank/DDBJ databases">
        <title>Yersinia pestis Nepal516A whole genome shotgun sequencing project.</title>
        <authorList>
            <person name="Plunkett G. III"/>
            <person name="Anderson B.D."/>
            <person name="Baumler D.J."/>
            <person name="Burland V."/>
            <person name="Cabot E.L."/>
            <person name="Glasner J.D."/>
            <person name="Mau B."/>
            <person name="Neeno-Eckwall E."/>
            <person name="Perna N.T."/>
            <person name="Munk A.C."/>
            <person name="Tapia R."/>
            <person name="Green L.D."/>
            <person name="Rogers Y.C."/>
            <person name="Detter J.C."/>
            <person name="Bruce D.C."/>
            <person name="Brettin T.S."/>
        </authorList>
    </citation>
    <scope>NUCLEOTIDE SEQUENCE [LARGE SCALE GENOMIC DNA]</scope>
    <source>
        <strain>Nepal516</strain>
    </source>
</reference>
<proteinExistence type="inferred from homology"/>
<gene>
    <name evidence="1" type="primary">purR</name>
    <name type="ordered locus">YPN_1841</name>
    <name type="ORF">YP516_2046</name>
</gene>
<comment type="function">
    <text evidence="1">Is the main repressor of the genes involved in the de novo synthesis of purine nucleotides, regulating purB, purC, purEK, purF, purHD, purL, purMN and guaBA expression. PurR is allosterically activated to bind its cognate DNA by binding the purine corepressors, hypoxanthine or guanine, thereby effecting transcription repression.</text>
</comment>
<comment type="pathway">
    <text>Purine metabolism; purine nucleotide biosynthesis [regulation].</text>
</comment>
<comment type="subunit">
    <text evidence="1">Homodimer.</text>
</comment>
<comment type="domain">
    <text evidence="1">Consists of two structural and functional domains: an N-terminal DNA-binding domain, approximately the first 60 residues, and a larger C-terminal domain, approximately 280 residues, which imparts the function of corepressor binding and oligomerization.</text>
</comment>
<feature type="chain" id="PRO_0000279679" description="HTH-type transcriptional repressor PurR">
    <location>
        <begin position="1"/>
        <end position="341"/>
    </location>
</feature>
<feature type="domain" description="HTH lacI-type" evidence="1">
    <location>
        <begin position="2"/>
        <end position="56"/>
    </location>
</feature>
<feature type="DNA-binding region" description="H-T-H motif" evidence="1">
    <location>
        <begin position="4"/>
        <end position="23"/>
    </location>
</feature>
<feature type="DNA-binding region" evidence="1">
    <location>
        <begin position="48"/>
        <end position="56"/>
    </location>
</feature>
<feature type="binding site" evidence="1">
    <location>
        <position position="73"/>
    </location>
    <ligand>
        <name>hypoxanthine</name>
        <dbReference type="ChEBI" id="CHEBI:17368"/>
    </ligand>
</feature>
<feature type="binding site" evidence="1">
    <location>
        <position position="190"/>
    </location>
    <ligand>
        <name>hypoxanthine</name>
        <dbReference type="ChEBI" id="CHEBI:17368"/>
    </ligand>
</feature>
<feature type="binding site" evidence="1">
    <location>
        <position position="192"/>
    </location>
    <ligand>
        <name>hypoxanthine</name>
        <dbReference type="ChEBI" id="CHEBI:17368"/>
    </ligand>
</feature>
<feature type="binding site" evidence="1">
    <location>
        <position position="221"/>
    </location>
    <ligand>
        <name>hypoxanthine</name>
        <dbReference type="ChEBI" id="CHEBI:17368"/>
    </ligand>
</feature>
<feature type="binding site" evidence="1">
    <location>
        <position position="275"/>
    </location>
    <ligand>
        <name>hypoxanthine</name>
        <dbReference type="ChEBI" id="CHEBI:17368"/>
    </ligand>
</feature>
<name>PURR_YERPN</name>
<accession>Q1CIL0</accession>
<accession>C4GTE5</accession>
<protein>
    <recommendedName>
        <fullName evidence="1">HTH-type transcriptional repressor PurR</fullName>
    </recommendedName>
    <alternativeName>
        <fullName evidence="1">Pur regulon repressor</fullName>
    </alternativeName>
    <alternativeName>
        <fullName evidence="1">Purine nucleotide synthesis repressor</fullName>
    </alternativeName>
</protein>
<sequence length="341" mass="37839">MATIKDVAKHAGVSTTTVSHVINKTRFVAENTKAAVWAAIKELHYSPSAVARSLKVNHTKSIGLLATSSEAPYFAEVIEAVENSCYSKGYTLILCNSHNNLDKQKAYLAMLAQKRVDGLLVMCSEYPDQLLGMLEDYRNIPMVVMDWGTARGDFTDSIIDNAFEGGYLAGRYLIERGHRDIGAIPGQLARNTGGGRHQGFLKALEEANIPVREEWIVQGDFEPESGYKAMHQILTQKHRPTAVFCGGDIMAMGAICAADELGLRVPQDISVIGYDNVRNARYFSPALTTIHQPKERLGETAFAMLLDRIVSKREDPQTIEVHPKLVERRSVADGPFRDYRR</sequence>
<evidence type="ECO:0000255" key="1">
    <source>
        <dbReference type="HAMAP-Rule" id="MF_01277"/>
    </source>
</evidence>
<organism>
    <name type="scientific">Yersinia pestis bv. Antiqua (strain Nepal516)</name>
    <dbReference type="NCBI Taxonomy" id="377628"/>
    <lineage>
        <taxon>Bacteria</taxon>
        <taxon>Pseudomonadati</taxon>
        <taxon>Pseudomonadota</taxon>
        <taxon>Gammaproteobacteria</taxon>
        <taxon>Enterobacterales</taxon>
        <taxon>Yersiniaceae</taxon>
        <taxon>Yersinia</taxon>
    </lineage>
</organism>